<feature type="chain" id="PRO_1000052573" description="Large ribosomal subunit protein uL22">
    <location>
        <begin position="1"/>
        <end position="111"/>
    </location>
</feature>
<reference key="1">
    <citation type="journal article" date="2009" name="PLoS ONE">
        <title>Complete genome sequence of Francisella tularensis subspecies holarctica FTNF002-00.</title>
        <authorList>
            <person name="Barabote R.D."/>
            <person name="Xie G."/>
            <person name="Brettin T.S."/>
            <person name="Hinrichs S.H."/>
            <person name="Fey P.D."/>
            <person name="Jay J.J."/>
            <person name="Engle J.L."/>
            <person name="Godbole S.D."/>
            <person name="Noronha J.M."/>
            <person name="Scheuermann R.H."/>
            <person name="Zhou L.W."/>
            <person name="Lion C."/>
            <person name="Dempsey M.P."/>
        </authorList>
    </citation>
    <scope>NUCLEOTIDE SEQUENCE [LARGE SCALE GENOMIC DNA]</scope>
    <source>
        <strain>FTNF002-00 / FTA</strain>
    </source>
</reference>
<accession>A7N9T1</accession>
<organism>
    <name type="scientific">Francisella tularensis subsp. holarctica (strain FTNF002-00 / FTA)</name>
    <dbReference type="NCBI Taxonomy" id="458234"/>
    <lineage>
        <taxon>Bacteria</taxon>
        <taxon>Pseudomonadati</taxon>
        <taxon>Pseudomonadota</taxon>
        <taxon>Gammaproteobacteria</taxon>
        <taxon>Thiotrichales</taxon>
        <taxon>Francisellaceae</taxon>
        <taxon>Francisella</taxon>
    </lineage>
</organism>
<evidence type="ECO:0000255" key="1">
    <source>
        <dbReference type="HAMAP-Rule" id="MF_01331"/>
    </source>
</evidence>
<evidence type="ECO:0000305" key="2"/>
<keyword id="KW-0687">Ribonucleoprotein</keyword>
<keyword id="KW-0689">Ribosomal protein</keyword>
<keyword id="KW-0694">RNA-binding</keyword>
<keyword id="KW-0699">rRNA-binding</keyword>
<sequence length="111" mass="12201">MEVQAKLKFARISAQKCRLVADQIRGLPVEQAINLLTFSNKKAAVLIKGVLNSAVANAEHNDGMDVDSLVVSTIFVDEGPTMKRFEARAKGRGNRILKRTSHITVKVAEKK</sequence>
<protein>
    <recommendedName>
        <fullName evidence="1">Large ribosomal subunit protein uL22</fullName>
    </recommendedName>
    <alternativeName>
        <fullName evidence="2">50S ribosomal protein L22</fullName>
    </alternativeName>
</protein>
<dbReference type="EMBL" id="CP000803">
    <property type="protein sequence ID" value="ABU60734.1"/>
    <property type="molecule type" value="Genomic_DNA"/>
</dbReference>
<dbReference type="RefSeq" id="WP_003027193.1">
    <property type="nucleotide sequence ID" value="NC_009749.1"/>
</dbReference>
<dbReference type="SMR" id="A7N9T1"/>
<dbReference type="GeneID" id="75264256"/>
<dbReference type="KEGG" id="fta:FTA_0257"/>
<dbReference type="HOGENOM" id="CLU_083987_3_3_6"/>
<dbReference type="GO" id="GO:0022625">
    <property type="term" value="C:cytosolic large ribosomal subunit"/>
    <property type="evidence" value="ECO:0007669"/>
    <property type="project" value="TreeGrafter"/>
</dbReference>
<dbReference type="GO" id="GO:0019843">
    <property type="term" value="F:rRNA binding"/>
    <property type="evidence" value="ECO:0007669"/>
    <property type="project" value="UniProtKB-UniRule"/>
</dbReference>
<dbReference type="GO" id="GO:0003735">
    <property type="term" value="F:structural constituent of ribosome"/>
    <property type="evidence" value="ECO:0007669"/>
    <property type="project" value="InterPro"/>
</dbReference>
<dbReference type="GO" id="GO:0006412">
    <property type="term" value="P:translation"/>
    <property type="evidence" value="ECO:0007669"/>
    <property type="project" value="UniProtKB-UniRule"/>
</dbReference>
<dbReference type="CDD" id="cd00336">
    <property type="entry name" value="Ribosomal_L22"/>
    <property type="match status" value="1"/>
</dbReference>
<dbReference type="FunFam" id="3.90.470.10:FF:000001">
    <property type="entry name" value="50S ribosomal protein L22"/>
    <property type="match status" value="1"/>
</dbReference>
<dbReference type="Gene3D" id="3.90.470.10">
    <property type="entry name" value="Ribosomal protein L22/L17"/>
    <property type="match status" value="1"/>
</dbReference>
<dbReference type="HAMAP" id="MF_01331_B">
    <property type="entry name" value="Ribosomal_uL22_B"/>
    <property type="match status" value="1"/>
</dbReference>
<dbReference type="InterPro" id="IPR001063">
    <property type="entry name" value="Ribosomal_uL22"/>
</dbReference>
<dbReference type="InterPro" id="IPR005727">
    <property type="entry name" value="Ribosomal_uL22_bac/chlpt-type"/>
</dbReference>
<dbReference type="InterPro" id="IPR047867">
    <property type="entry name" value="Ribosomal_uL22_bac/org-type"/>
</dbReference>
<dbReference type="InterPro" id="IPR018260">
    <property type="entry name" value="Ribosomal_uL22_CS"/>
</dbReference>
<dbReference type="InterPro" id="IPR036394">
    <property type="entry name" value="Ribosomal_uL22_sf"/>
</dbReference>
<dbReference type="NCBIfam" id="TIGR01044">
    <property type="entry name" value="rplV_bact"/>
    <property type="match status" value="1"/>
</dbReference>
<dbReference type="PANTHER" id="PTHR13501">
    <property type="entry name" value="CHLOROPLAST 50S RIBOSOMAL PROTEIN L22-RELATED"/>
    <property type="match status" value="1"/>
</dbReference>
<dbReference type="PANTHER" id="PTHR13501:SF8">
    <property type="entry name" value="LARGE RIBOSOMAL SUBUNIT PROTEIN UL22M"/>
    <property type="match status" value="1"/>
</dbReference>
<dbReference type="Pfam" id="PF00237">
    <property type="entry name" value="Ribosomal_L22"/>
    <property type="match status" value="1"/>
</dbReference>
<dbReference type="SUPFAM" id="SSF54843">
    <property type="entry name" value="Ribosomal protein L22"/>
    <property type="match status" value="1"/>
</dbReference>
<dbReference type="PROSITE" id="PS00464">
    <property type="entry name" value="RIBOSOMAL_L22"/>
    <property type="match status" value="1"/>
</dbReference>
<gene>
    <name evidence="1" type="primary">rplV</name>
    <name type="ordered locus">FTA_0257</name>
</gene>
<proteinExistence type="inferred from homology"/>
<comment type="function">
    <text evidence="1">This protein binds specifically to 23S rRNA; its binding is stimulated by other ribosomal proteins, e.g. L4, L17, and L20. It is important during the early stages of 50S assembly. It makes multiple contacts with different domains of the 23S rRNA in the assembled 50S subunit and ribosome (By similarity).</text>
</comment>
<comment type="function">
    <text evidence="1">The globular domain of the protein is located near the polypeptide exit tunnel on the outside of the subunit, while an extended beta-hairpin is found that lines the wall of the exit tunnel in the center of the 70S ribosome.</text>
</comment>
<comment type="subunit">
    <text evidence="1">Part of the 50S ribosomal subunit.</text>
</comment>
<comment type="similarity">
    <text evidence="1">Belongs to the universal ribosomal protein uL22 family.</text>
</comment>
<name>RL22_FRATF</name>